<feature type="chain" id="PRO_1000136737" description="Ribosome maturation factor RimP">
    <location>
        <begin position="1"/>
        <end position="163"/>
    </location>
</feature>
<keyword id="KW-0963">Cytoplasm</keyword>
<keyword id="KW-0690">Ribosome biogenesis</keyword>
<sequence>MADLYALTQQALAGMDVELVDVERAALGLLRVTIDKAGGVRIEDCEQVSRQLSRVYEVENIDYKRLEVGSPGVDRPLRTEAELRRFAGERIEIKLRQPLDGRKVFSGILSAPANDGAAADAQPAVFGLEFEAKKDDIQVLNFTLGDVERAKLDPVLDFKGKKR</sequence>
<reference key="1">
    <citation type="journal article" date="2008" name="BMC Genomics">
        <title>The missing link: Bordetella petrii is endowed with both the metabolic versatility of environmental bacteria and virulence traits of pathogenic Bordetellae.</title>
        <authorList>
            <person name="Gross R."/>
            <person name="Guzman C.A."/>
            <person name="Sebaihia M."/>
            <person name="Martin dos Santos V.A.P."/>
            <person name="Pieper D.H."/>
            <person name="Koebnik R."/>
            <person name="Lechner M."/>
            <person name="Bartels D."/>
            <person name="Buhrmester J."/>
            <person name="Choudhuri J.V."/>
            <person name="Ebensen T."/>
            <person name="Gaigalat L."/>
            <person name="Herrmann S."/>
            <person name="Khachane A.N."/>
            <person name="Larisch C."/>
            <person name="Link S."/>
            <person name="Linke B."/>
            <person name="Meyer F."/>
            <person name="Mormann S."/>
            <person name="Nakunst D."/>
            <person name="Rueckert C."/>
            <person name="Schneiker-Bekel S."/>
            <person name="Schulze K."/>
            <person name="Voerholter F.-J."/>
            <person name="Yevsa T."/>
            <person name="Engle J.T."/>
            <person name="Goldman W.E."/>
            <person name="Puehler A."/>
            <person name="Goebel U.B."/>
            <person name="Goesmann A."/>
            <person name="Bloecker H."/>
            <person name="Kaiser O."/>
            <person name="Martinez-Arias R."/>
        </authorList>
    </citation>
    <scope>NUCLEOTIDE SEQUENCE [LARGE SCALE GENOMIC DNA]</scope>
    <source>
        <strain>ATCC BAA-461 / DSM 12804 / CCUG 43448</strain>
    </source>
</reference>
<evidence type="ECO:0000255" key="1">
    <source>
        <dbReference type="HAMAP-Rule" id="MF_01077"/>
    </source>
</evidence>
<accession>A9ITY3</accession>
<dbReference type="EMBL" id="AM902716">
    <property type="protein sequence ID" value="CAP43477.1"/>
    <property type="molecule type" value="Genomic_DNA"/>
</dbReference>
<dbReference type="SMR" id="A9ITY3"/>
<dbReference type="STRING" id="94624.Bpet3135"/>
<dbReference type="KEGG" id="bpt:Bpet3135"/>
<dbReference type="eggNOG" id="COG0779">
    <property type="taxonomic scope" value="Bacteria"/>
</dbReference>
<dbReference type="Proteomes" id="UP000001225">
    <property type="component" value="Chromosome"/>
</dbReference>
<dbReference type="GO" id="GO:0005829">
    <property type="term" value="C:cytosol"/>
    <property type="evidence" value="ECO:0007669"/>
    <property type="project" value="TreeGrafter"/>
</dbReference>
<dbReference type="GO" id="GO:0000028">
    <property type="term" value="P:ribosomal small subunit assembly"/>
    <property type="evidence" value="ECO:0007669"/>
    <property type="project" value="TreeGrafter"/>
</dbReference>
<dbReference type="GO" id="GO:0006412">
    <property type="term" value="P:translation"/>
    <property type="evidence" value="ECO:0007669"/>
    <property type="project" value="TreeGrafter"/>
</dbReference>
<dbReference type="CDD" id="cd01734">
    <property type="entry name" value="YlxS_C"/>
    <property type="match status" value="1"/>
</dbReference>
<dbReference type="Gene3D" id="2.30.30.180">
    <property type="entry name" value="Ribosome maturation factor RimP, C-terminal domain"/>
    <property type="match status" value="1"/>
</dbReference>
<dbReference type="Gene3D" id="3.30.300.70">
    <property type="entry name" value="RimP-like superfamily, N-terminal"/>
    <property type="match status" value="1"/>
</dbReference>
<dbReference type="HAMAP" id="MF_01077">
    <property type="entry name" value="RimP"/>
    <property type="match status" value="1"/>
</dbReference>
<dbReference type="InterPro" id="IPR003728">
    <property type="entry name" value="Ribosome_maturation_RimP"/>
</dbReference>
<dbReference type="InterPro" id="IPR028998">
    <property type="entry name" value="RimP_C"/>
</dbReference>
<dbReference type="InterPro" id="IPR036847">
    <property type="entry name" value="RimP_C_sf"/>
</dbReference>
<dbReference type="InterPro" id="IPR028989">
    <property type="entry name" value="RimP_N"/>
</dbReference>
<dbReference type="InterPro" id="IPR035956">
    <property type="entry name" value="RimP_N_sf"/>
</dbReference>
<dbReference type="NCBIfam" id="NF000929">
    <property type="entry name" value="PRK00092.2-1"/>
    <property type="match status" value="1"/>
</dbReference>
<dbReference type="PANTHER" id="PTHR33867">
    <property type="entry name" value="RIBOSOME MATURATION FACTOR RIMP"/>
    <property type="match status" value="1"/>
</dbReference>
<dbReference type="PANTHER" id="PTHR33867:SF1">
    <property type="entry name" value="RIBOSOME MATURATION FACTOR RIMP"/>
    <property type="match status" value="1"/>
</dbReference>
<dbReference type="Pfam" id="PF17384">
    <property type="entry name" value="DUF150_C"/>
    <property type="match status" value="1"/>
</dbReference>
<dbReference type="Pfam" id="PF02576">
    <property type="entry name" value="RimP_N"/>
    <property type="match status" value="1"/>
</dbReference>
<dbReference type="SUPFAM" id="SSF74942">
    <property type="entry name" value="YhbC-like, C-terminal domain"/>
    <property type="match status" value="1"/>
</dbReference>
<dbReference type="SUPFAM" id="SSF75420">
    <property type="entry name" value="YhbC-like, N-terminal domain"/>
    <property type="match status" value="1"/>
</dbReference>
<name>RIMP_BORPD</name>
<gene>
    <name evidence="1" type="primary">rimP</name>
    <name type="ordered locus">Bpet3135</name>
</gene>
<organism>
    <name type="scientific">Bordetella petrii (strain ATCC BAA-461 / DSM 12804 / CCUG 43448)</name>
    <dbReference type="NCBI Taxonomy" id="340100"/>
    <lineage>
        <taxon>Bacteria</taxon>
        <taxon>Pseudomonadati</taxon>
        <taxon>Pseudomonadota</taxon>
        <taxon>Betaproteobacteria</taxon>
        <taxon>Burkholderiales</taxon>
        <taxon>Alcaligenaceae</taxon>
        <taxon>Bordetella</taxon>
    </lineage>
</organism>
<protein>
    <recommendedName>
        <fullName evidence="1">Ribosome maturation factor RimP</fullName>
    </recommendedName>
</protein>
<comment type="function">
    <text evidence="1">Required for maturation of 30S ribosomal subunits.</text>
</comment>
<comment type="subcellular location">
    <subcellularLocation>
        <location evidence="1">Cytoplasm</location>
    </subcellularLocation>
</comment>
<comment type="similarity">
    <text evidence="1">Belongs to the RimP family.</text>
</comment>
<proteinExistence type="inferred from homology"/>